<organism>
    <name type="scientific">Chlamydomonas reinhardtii</name>
    <name type="common">Chlamydomonas smithii</name>
    <dbReference type="NCBI Taxonomy" id="3055"/>
    <lineage>
        <taxon>Eukaryota</taxon>
        <taxon>Viridiplantae</taxon>
        <taxon>Chlorophyta</taxon>
        <taxon>core chlorophytes</taxon>
        <taxon>Chlorophyceae</taxon>
        <taxon>CS clade</taxon>
        <taxon>Chlamydomonadales</taxon>
        <taxon>Chlamydomonadaceae</taxon>
        <taxon>Chlamydomonas</taxon>
    </lineage>
</organism>
<keyword id="KW-0066">ATP synthesis</keyword>
<keyword id="KW-0067">ATP-binding</keyword>
<keyword id="KW-0138">CF(0)</keyword>
<keyword id="KW-0150">Chloroplast</keyword>
<keyword id="KW-0903">Direct protein sequencing</keyword>
<keyword id="KW-0375">Hydrogen ion transport</keyword>
<keyword id="KW-0406">Ion transport</keyword>
<keyword id="KW-0472">Membrane</keyword>
<keyword id="KW-0547">Nucleotide-binding</keyword>
<keyword id="KW-0934">Plastid</keyword>
<keyword id="KW-1185">Reference proteome</keyword>
<keyword id="KW-0793">Thylakoid</keyword>
<keyword id="KW-0812">Transmembrane</keyword>
<keyword id="KW-1133">Transmembrane helix</keyword>
<keyword id="KW-0813">Transport</keyword>
<name>ATPF_CHLRE</name>
<feature type="chain" id="PRO_0000082404" description="ATP synthase subunit b, chloroplastic">
    <location>
        <begin position="1"/>
        <end position="175"/>
    </location>
</feature>
<feature type="transmembrane region" description="Helical" evidence="1">
    <location>
        <begin position="22"/>
        <end position="42"/>
    </location>
</feature>
<feature type="sequence conflict" description="In Ref. 3; AA sequence." evidence="4" ref="3">
    <original>H</original>
    <variation>M</variation>
    <location>
        <position position="13"/>
    </location>
</feature>
<feature type="sequence conflict" description="In Ref. 3; AA sequence." evidence="4" ref="3">
    <original>A</original>
    <variation>Y</variation>
    <location>
        <position position="31"/>
    </location>
</feature>
<sequence>MVFLPDNILILGHGGFGFNTNVFETNIINLAAVVGIVVSFVGKNLSSLLEDRKNTIVKNLEEANQRAIEAEQKLTAARTQLETAKKKAQEIREEGVLRATQEINNVVSQHELRLARLQEFKQETLAFYQQKAFKQAYLYVINKIMTRVRERLNKGLDSTYHVVVNNFYVSRFTQF</sequence>
<dbReference type="EMBL" id="AY161319">
    <property type="protein sequence ID" value="AAN41265.1"/>
    <property type="molecule type" value="Genomic_DNA"/>
</dbReference>
<dbReference type="EMBL" id="FJ423446">
    <property type="protein sequence ID" value="ACJ50141.1"/>
    <property type="molecule type" value="Genomic_DNA"/>
</dbReference>
<dbReference type="EMBL" id="BK000554">
    <property type="protein sequence ID" value="DAA00955.1"/>
    <property type="molecule type" value="Genomic_DNA"/>
</dbReference>
<dbReference type="PIR" id="S68393">
    <property type="entry name" value="S68393"/>
</dbReference>
<dbReference type="RefSeq" id="NP_958410.1">
    <property type="nucleotide sequence ID" value="NC_005353.1"/>
</dbReference>
<dbReference type="SMR" id="Q8HTL5"/>
<dbReference type="FunCoup" id="Q8HTL5">
    <property type="interactions" value="139"/>
</dbReference>
<dbReference type="STRING" id="3055.Q8HTL5"/>
<dbReference type="PaxDb" id="3055-DAA00955"/>
<dbReference type="GeneID" id="2716983"/>
<dbReference type="KEGG" id="cre:ChreCp054"/>
<dbReference type="eggNOG" id="ENOG502R390">
    <property type="taxonomic scope" value="Eukaryota"/>
</dbReference>
<dbReference type="HOGENOM" id="CLU_079215_8_1_1"/>
<dbReference type="InParanoid" id="Q8HTL5"/>
<dbReference type="BioCyc" id="CHLAMY:CHRECP054-MONOMER"/>
<dbReference type="Proteomes" id="UP000006906">
    <property type="component" value="Chloroplast"/>
</dbReference>
<dbReference type="GO" id="GO:0009535">
    <property type="term" value="C:chloroplast thylakoid membrane"/>
    <property type="evidence" value="ECO:0007669"/>
    <property type="project" value="UniProtKB-SubCell"/>
</dbReference>
<dbReference type="GO" id="GO:0045259">
    <property type="term" value="C:proton-transporting ATP synthase complex"/>
    <property type="evidence" value="ECO:0007669"/>
    <property type="project" value="UniProtKB-KW"/>
</dbReference>
<dbReference type="GO" id="GO:0005524">
    <property type="term" value="F:ATP binding"/>
    <property type="evidence" value="ECO:0007669"/>
    <property type="project" value="UniProtKB-KW"/>
</dbReference>
<dbReference type="GO" id="GO:0046933">
    <property type="term" value="F:proton-transporting ATP synthase activity, rotational mechanism"/>
    <property type="evidence" value="ECO:0007669"/>
    <property type="project" value="UniProtKB-UniRule"/>
</dbReference>
<dbReference type="CDD" id="cd06503">
    <property type="entry name" value="ATP-synt_Fo_b"/>
    <property type="match status" value="1"/>
</dbReference>
<dbReference type="HAMAP" id="MF_01398">
    <property type="entry name" value="ATP_synth_b_bprime"/>
    <property type="match status" value="1"/>
</dbReference>
<dbReference type="InterPro" id="IPR002146">
    <property type="entry name" value="ATP_synth_b/b'su_bac/chlpt"/>
</dbReference>
<dbReference type="PANTHER" id="PTHR34264">
    <property type="entry name" value="ATP SYNTHASE SUBUNIT B, CHLOROPLASTIC"/>
    <property type="match status" value="1"/>
</dbReference>
<dbReference type="PANTHER" id="PTHR34264:SF3">
    <property type="entry name" value="ATP SYNTHASE SUBUNIT B, CHLOROPLASTIC"/>
    <property type="match status" value="1"/>
</dbReference>
<dbReference type="Pfam" id="PF00430">
    <property type="entry name" value="ATP-synt_B"/>
    <property type="match status" value="1"/>
</dbReference>
<reference key="1">
    <citation type="submission" date="2002-10" db="EMBL/GenBank/DDBJ databases">
        <title>Chlamydomonas reinhardtii chloroplast atpF gene.</title>
        <authorList>
            <person name="Rivier C."/>
            <person name="Rahire M."/>
            <person name="Rochaix J.-D."/>
        </authorList>
    </citation>
    <scope>NUCLEOTIDE SEQUENCE [GENOMIC DNA]</scope>
</reference>
<reference key="2">
    <citation type="journal article" date="2009" name="BMC Evol. Biol.">
        <title>Nucleotide diversity of the Chlamydomonas reinhardtii plastid genome: addressing the mutational-hazard hypothesis.</title>
        <authorList>
            <person name="Smith D.R."/>
            <person name="Lee R.W."/>
        </authorList>
    </citation>
    <scope>NUCLEOTIDE SEQUENCE [LARGE SCALE GENOMIC DNA]</scope>
    <source>
        <strain>CC-503</strain>
    </source>
</reference>
<reference key="3">
    <citation type="journal article" date="1995" name="FEBS Lett.">
        <title>Isolation of CF0CF1 from Chlamydomonas reinhardtii cw15 and the N-terminal amino acid sequences of the CF0CF1 subunits.</title>
        <authorList>
            <person name="Fiedler H.R."/>
            <person name="Schmid R."/>
            <person name="Leu S."/>
            <person name="Shavit N."/>
            <person name="Strotmann H."/>
        </authorList>
    </citation>
    <scope>PROTEIN SEQUENCE OF 13-31</scope>
    <scope>FUNCTION</scope>
    <scope>SUBUNIT</scope>
    <scope>SUBCELLULAR LOCATION</scope>
    <source>
        <strain>cw15</strain>
    </source>
</reference>
<reference key="4">
    <citation type="journal article" date="2002" name="Plant Cell">
        <title>The Chlamydomonas reinhardtii plastid chromosome: islands of genes in a sea of repeats.</title>
        <authorList>
            <person name="Maul J.E."/>
            <person name="Lilly J.W."/>
            <person name="Cui L."/>
            <person name="dePamphilis C.W."/>
            <person name="Miller W."/>
            <person name="Harris E.H."/>
            <person name="Stern D.B."/>
        </authorList>
    </citation>
    <scope>IDENTIFICATION</scope>
    <scope>COMPLETE PLASTID GENOME</scope>
</reference>
<geneLocation type="chloroplast"/>
<proteinExistence type="evidence at protein level"/>
<gene>
    <name evidence="1" type="primary">atpF</name>
</gene>
<comment type="function">
    <text evidence="1 2">F(1)F(0) ATP synthase produces ATP from ADP in the presence of a proton or sodium gradient. F-type ATPases consist of two structural domains, F(1) containing the extramembraneous catalytic core and F(0) containing the membrane proton channel, linked together by a central stalk and a peripheral stalk. During catalysis, ATP synthesis in the catalytic domain of F(1) is coupled via a rotary mechanism of the central stalk subunits to proton translocation.</text>
</comment>
<comment type="function">
    <text evidence="1">Component of the F(0) channel, it forms part of the peripheral stalk, linking F(1) to F(0).</text>
</comment>
<comment type="subunit">
    <text evidence="1 2">F-type ATPases have 2 components, F(1) - the catalytic core - and F(0) - the membrane proton channel. F(1) has five subunits: alpha(3), beta(3), gamma(1), delta(1), epsilon(1). F(0) has four main subunits: a(1), b(1), b'(1) and c(10-14). The alpha and beta chains form an alternating ring which encloses part of the gamma chain. F(1) is attached to F(0) by a central stalk formed by the gamma and epsilon chains, while a peripheral stalk is formed by the delta, b and b' chains.</text>
</comment>
<comment type="subcellular location">
    <subcellularLocation>
        <location evidence="1 2">Plastid</location>
        <location evidence="1 2">Chloroplast thylakoid membrane</location>
        <topology evidence="1">Single-pass membrane protein</topology>
    </subcellularLocation>
</comment>
<comment type="miscellaneous">
    <text>In plastids the F-type ATPase is also known as CF(1)CF(0).</text>
</comment>
<comment type="similarity">
    <text evidence="1">Belongs to the ATPase B chain family.</text>
</comment>
<protein>
    <recommendedName>
        <fullName evidence="1 3">ATP synthase subunit b, chloroplastic</fullName>
    </recommendedName>
    <alternativeName>
        <fullName evidence="1">ATP synthase F(0) sector subunit b</fullName>
    </alternativeName>
    <alternativeName>
        <fullName evidence="1">ATPase subunit I</fullName>
    </alternativeName>
</protein>
<accession>Q8HTL5</accession>
<accession>B7U1J4</accession>
<accession>Q9T2G6</accession>
<evidence type="ECO:0000255" key="1">
    <source>
        <dbReference type="HAMAP-Rule" id="MF_01398"/>
    </source>
</evidence>
<evidence type="ECO:0000269" key="2">
    <source>
    </source>
</evidence>
<evidence type="ECO:0000303" key="3">
    <source>
    </source>
</evidence>
<evidence type="ECO:0000305" key="4"/>